<comment type="function">
    <text evidence="1 6 9 12">Required for transcriptional activation subsequent to the assembly of the pre-initiation complex (By similarity). Component of the Mediator complex, a coactivator involved in the regulated transcription of nearly all RNA polymerase II-dependent genes. Mediator functions as a bridge to convey information from gene-specific regulatory proteins to the basal RNA polymerase II transcription machinery. Mediator is recruited to promoters by direct interactions with regulatory proteins and serves as a scaffold for the assembly of a functional pre-initiation complex with RNA polymerase II and the general transcription factors. Required for transcriptional activation by adenovirus E1A protein. Required for ELK1-dependent transcriptional activation in response to activated Ras signaling.</text>
</comment>
<comment type="subunit">
    <text evidence="2 4 5 6 7 8 9 10 11 12 13 14 16">Interacts with ELK1 (By similarity). Component of the Mediator complex, which is composed of MED1, MED4, MED6, MED7, MED8, MED9, MED10, MED11, MED12, MED13, MED13L, MED14, MED15, MED16, MED17, MED18, MED19, MED20, MED21, MED22, MED23, MED24, MED25, MED26, MED27, MED29, MED30, MED31, CCNC, CDK8 and CDC2L6/CDK11. The MED12, MED13, CCNC and CDK8 subunits form a distinct module termed the CDK8 module. Mediator containing the CDK8 module is less active than Mediator lacking this module in supporting transcriptional activation. Individual preparations of the Mediator complex lacking one or more distinct subunits have been variously termed ARC, CRSP, DRIP, PC2, SMCC and TRAP. Interacts with CEBPB (when not methylated), CTNNB1, and GLI3. Interacts with the adenovirus E1A protein.</text>
</comment>
<comment type="interaction">
    <interactant intactId="EBI-311161">
        <id>Q9ULK4</id>
    </interactant>
    <interactant intactId="EBI-394440">
        <id>Q9UHV7</id>
        <label>MED13</label>
    </interactant>
    <organismsDiffer>false</organismsDiffer>
    <experiments>3</experiments>
</comment>
<comment type="interaction">
    <interactant intactId="EBI-311161">
        <id>Q9ULK4</id>
    </interactant>
    <interactant intactId="EBI-394489">
        <id>O60244</id>
        <label>MED14</label>
    </interactant>
    <organismsDiffer>false</organismsDiffer>
    <experiments>6</experiments>
</comment>
<comment type="interaction">
    <interactant intactId="EBI-311161">
        <id>Q9ULK4</id>
    </interactant>
    <interactant intactId="EBI-394541">
        <id>Q9Y2X0</id>
        <label>MED16</label>
    </interactant>
    <organismsDiffer>false</organismsDiffer>
    <experiments>5</experiments>
</comment>
<comment type="interaction">
    <interactant intactId="EBI-311161">
        <id>Q9ULK4</id>
    </interactant>
    <interactant intactId="EBI-394558">
        <id>Q71SY5</id>
        <label>MED25</label>
    </interactant>
    <organismsDiffer>false</organismsDiffer>
    <experiments>5</experiments>
</comment>
<comment type="subcellular location">
    <subcellularLocation>
        <location evidence="22">Nucleus</location>
    </subcellularLocation>
</comment>
<comment type="alternative products">
    <event type="alternative splicing"/>
    <isoform>
        <id>Q9ULK4-1</id>
        <name>1</name>
        <sequence type="displayed"/>
    </isoform>
    <isoform>
        <id>Q9ULK4-2</id>
        <name>2</name>
        <sequence type="described" ref="VSP_004034 VSP_004036 VSP_004037"/>
    </isoform>
    <isoform>
        <id>Q9ULK4-3</id>
        <name>3</name>
        <sequence type="described" ref="VSP_004034 VSP_004035"/>
    </isoform>
    <isoform>
        <id>Q9ULK4-4</id>
        <name>4</name>
        <sequence type="described" ref="VSP_004035"/>
    </isoform>
    <isoform>
        <id>Q9ULK4-5</id>
        <name>5</name>
        <sequence type="described" ref="VSP_028380"/>
    </isoform>
    <isoform>
        <id>Q9ULK4-6</id>
        <name>6</name>
        <sequence type="described" ref="VSP_047860 VSP_047861"/>
    </isoform>
    <text>Experimental confirmation may be lacking for some isoforms.</text>
</comment>
<comment type="disease" evidence="15">
    <disease id="DI-03250">
        <name>Intellectual developmental disorder, autosomal recessive 18, with or without epilepsy</name>
        <acronym>MRT18</acronym>
        <description>A disorder characterized by significantly below average general intellectual functioning associated with impairments in adaptive behavior and manifested during the developmental period.</description>
        <dbReference type="MIM" id="614249"/>
    </disease>
    <text>The disease is caused by variants affecting the gene represented in this entry.</text>
</comment>
<comment type="similarity">
    <text evidence="22">Belongs to the Mediator complex subunit 23 family.</text>
</comment>
<comment type="sequence caution" evidence="22">
    <conflict type="erroneous initiation">
        <sequence resource="EMBL-CDS" id="AAD12724"/>
    </conflict>
    <text>Extended N-terminus.</text>
</comment>
<comment type="sequence caution" evidence="22">
    <conflict type="frameshift">
        <sequence resource="EMBL-CDS" id="AAD31729"/>
    </conflict>
</comment>
<comment type="sequence caution" evidence="22">
    <conflict type="erroneous initiation">
        <sequence resource="EMBL-CDS" id="BAA86530"/>
    </conflict>
    <text>Extended N-terminus.</text>
</comment>
<proteinExistence type="evidence at protein level"/>
<keyword id="KW-0002">3D-structure</keyword>
<keyword id="KW-0010">Activator</keyword>
<keyword id="KW-0025">Alternative splicing</keyword>
<keyword id="KW-0903">Direct protein sequencing</keyword>
<keyword id="KW-0225">Disease variant</keyword>
<keyword id="KW-0991">Intellectual disability</keyword>
<keyword id="KW-0539">Nucleus</keyword>
<keyword id="KW-1267">Proteomics identification</keyword>
<keyword id="KW-1185">Reference proteome</keyword>
<keyword id="KW-0804">Transcription</keyword>
<keyword id="KW-0805">Transcription regulation</keyword>
<name>MED23_HUMAN</name>
<sequence length="1368" mass="156474">METQLQSIFEEVVKTEVIEEAFPGMFMDTPEDEKTKLISCLGAFRQFWGGLSQESHEQCIQWIVKFIHGQHSPKRISFLYDCLAMAVETGLLPPRLVCESLINSDTLEWERTQLWALTFKLVRKIIGGVDYKGVRDLLKVILEKILTIPNTVSSAVVQQLLAAREVIAYILERNACLLPAYFAVTEIRKLYPEGKLPHWLLGNLVSDFVDTFRPTARINSICGRCSLLPVVNNSGAICNSWKLDPATLRFPLKGLLPYDKDLFEPQTALLRYVLEQPYSRDMVCNMLGLNKQHKQRCPVLEDQLVDLVVYAMERSETEEKFDDGGTSQLLWQHLSSQLIFFVLFQFASFPHMVLSLHQKLAGRGLIKGRDHLMWVLLQFISGSIQKNALADFLPVMKLFDLLYPEKEYIPVPDINKPQSTHAFAMTCIWIHLNRKAQNDNSKLQIPIPHSLRLHHEFLQQSLRNKSLQMNDYKIALLCNAYSTNSECFTLPMGALVETIYGNGIMRIPLPGTNCMASGSITPLPMNLLDSLTVHAKMSLIHSIATRVIKLAHAKSSVALAPALVETYSRLLVYMEIESLGIKGFISQLLPTVFKSHAWGILHTLLEMFSYRMHHIQPHYRVQLLSHLHTLAAVAQTNQNQLHLCVESTALRLITALGSSEVQPQFTRFLSDPKTVLSAESEELNRALILTLARATHVTDFFTGSDSIQGTWCKDILQTIMSFTPHNWASHTLSCFPGPLQAFFKQNNVPQESRFNLKKNVEEEYRKWKSMSNENDIITHFSMQGSPPLFLCLLWKMLLETDHINQIGYRVLERIGARALVAHVRTFADFLVYEFSTSAGGQQLNKCIEILNDMVWKYNIVTLDRLILCLAMRSHEGNEAQVCYFIIQLLLLKPNDFRNRVSDFVKENSPEHWLQNDWHTKHMNYHKKYPEKLYFEGLAEQVDPPVQIQSPYLPIYFGNVCLRFLPVFDIVIHRFLELLPVSKSLETLLDHLGGLYKFHDRPVTYLYNTLHYYEMHLRDRAFLKRKLVHAIIGSLKDNRPQGWCLSDTYLKCAMNAREENPWVPDDTYYCRLIGRLVDTMAGKSPGPFPNCDWRFNEFPNPAAHALHVTCVELMALAVSGKEVGNALLNVVLKSQPLVPRENITAWMNAIGLIITALPEPYWIVLHDRIVSVISSPSLTSETEWVGYPFRLFDFTACHQSYSEMSCSYTLALAHAVWHHSSIGQLSLIPKFLTEVLLPIVKTEFQLLYVYHLVGPFLQRFQQERTRCMIEIGVAFYDMLLNVDQCSTHLNYMDPICDFLYHMKYMFTGDSVKEQVEKIICNLKPALKLRLRFITHISKMEPAAVPPQAMNSGSPAPQSNQVPVSLPVTQ</sequence>
<dbReference type="EMBL" id="AF105332">
    <property type="protein sequence ID" value="AAD31729.1"/>
    <property type="status" value="ALT_FRAME"/>
    <property type="molecule type" value="mRNA"/>
</dbReference>
<dbReference type="EMBL" id="AF135022">
    <property type="protein sequence ID" value="AAD30202.1"/>
    <property type="molecule type" value="mRNA"/>
</dbReference>
<dbReference type="EMBL" id="AF104255">
    <property type="protein sequence ID" value="AAD12724.1"/>
    <property type="status" value="ALT_INIT"/>
    <property type="molecule type" value="mRNA"/>
</dbReference>
<dbReference type="EMBL" id="EU392526">
    <property type="protein sequence ID" value="ACB88854.1"/>
    <property type="molecule type" value="mRNA"/>
</dbReference>
<dbReference type="EMBL" id="AB033042">
    <property type="protein sequence ID" value="BAA86530.1"/>
    <property type="status" value="ALT_INIT"/>
    <property type="molecule type" value="mRNA"/>
</dbReference>
<dbReference type="EMBL" id="AL136776">
    <property type="protein sequence ID" value="CAB66710.1"/>
    <property type="molecule type" value="mRNA"/>
</dbReference>
<dbReference type="EMBL" id="AL121575">
    <property type="status" value="NOT_ANNOTATED_CDS"/>
    <property type="molecule type" value="Genomic_DNA"/>
</dbReference>
<dbReference type="EMBL" id="CH471051">
    <property type="protein sequence ID" value="EAW48052.1"/>
    <property type="molecule type" value="Genomic_DNA"/>
</dbReference>
<dbReference type="EMBL" id="BC060759">
    <property type="protein sequence ID" value="AAH60759.1"/>
    <property type="molecule type" value="mRNA"/>
</dbReference>
<dbReference type="CCDS" id="CCDS5146.1">
    <molecule id="Q9ULK4-3"/>
</dbReference>
<dbReference type="CCDS" id="CCDS5147.1">
    <molecule id="Q9ULK4-1"/>
</dbReference>
<dbReference type="CCDS" id="CCDS59039.1">
    <molecule id="Q9ULK4-5"/>
</dbReference>
<dbReference type="RefSeq" id="NP_001257450.1">
    <molecule id="Q9ULK4-4"/>
    <property type="nucleotide sequence ID" value="NM_001270521.2"/>
</dbReference>
<dbReference type="RefSeq" id="NP_001257451.1">
    <molecule id="Q9ULK4-5"/>
    <property type="nucleotide sequence ID" value="NM_001270522.2"/>
</dbReference>
<dbReference type="RefSeq" id="NP_004821.2">
    <molecule id="Q9ULK4-1"/>
    <property type="nucleotide sequence ID" value="NM_004830.3"/>
</dbReference>
<dbReference type="RefSeq" id="NP_057063.2">
    <molecule id="Q9ULK4-3"/>
    <property type="nucleotide sequence ID" value="NM_015979.3"/>
</dbReference>
<dbReference type="PDB" id="6H02">
    <property type="method" value="X-ray"/>
    <property type="resolution" value="2.80 A"/>
    <property type="chains" value="A=1-1368"/>
</dbReference>
<dbReference type="PDB" id="7EMF">
    <property type="method" value="EM"/>
    <property type="resolution" value="3.50 A"/>
    <property type="chains" value="W=1-1368"/>
</dbReference>
<dbReference type="PDB" id="7ENA">
    <property type="method" value="EM"/>
    <property type="resolution" value="4.07 A"/>
    <property type="chains" value="w=1-1368"/>
</dbReference>
<dbReference type="PDB" id="7ENC">
    <property type="method" value="EM"/>
    <property type="resolution" value="4.13 A"/>
    <property type="chains" value="w=1-1368"/>
</dbReference>
<dbReference type="PDB" id="7ENJ">
    <property type="method" value="EM"/>
    <property type="resolution" value="4.40 A"/>
    <property type="chains" value="W=1-1368"/>
</dbReference>
<dbReference type="PDB" id="7LBM">
    <property type="method" value="EM"/>
    <property type="resolution" value="4.80 A"/>
    <property type="chains" value="1=1-1368"/>
</dbReference>
<dbReference type="PDB" id="8GXQ">
    <property type="method" value="EM"/>
    <property type="resolution" value="5.04 A"/>
    <property type="chains" value="w=1-1368"/>
</dbReference>
<dbReference type="PDB" id="8GXS">
    <property type="method" value="EM"/>
    <property type="resolution" value="4.16 A"/>
    <property type="chains" value="w=1-1368"/>
</dbReference>
<dbReference type="PDB" id="8T9D">
    <property type="method" value="EM"/>
    <property type="resolution" value="4.66 A"/>
    <property type="chains" value="R=1-1368"/>
</dbReference>
<dbReference type="PDB" id="8TQW">
    <property type="method" value="EM"/>
    <property type="resolution" value="8.20 A"/>
    <property type="chains" value="W=1-1368"/>
</dbReference>
<dbReference type="PDB" id="8TRH">
    <property type="method" value="EM"/>
    <property type="resolution" value="3.70 A"/>
    <property type="chains" value="W=1-1368"/>
</dbReference>
<dbReference type="PDBsum" id="6H02"/>
<dbReference type="PDBsum" id="7EMF"/>
<dbReference type="PDBsum" id="7ENA"/>
<dbReference type="PDBsum" id="7ENC"/>
<dbReference type="PDBsum" id="7ENJ"/>
<dbReference type="PDBsum" id="7LBM"/>
<dbReference type="PDBsum" id="8GXQ"/>
<dbReference type="PDBsum" id="8GXS"/>
<dbReference type="PDBsum" id="8T9D"/>
<dbReference type="PDBsum" id="8TQW"/>
<dbReference type="PDBsum" id="8TRH"/>
<dbReference type="EMDB" id="EMD-23255"/>
<dbReference type="EMDB" id="EMD-31191"/>
<dbReference type="EMDB" id="EMD-31204"/>
<dbReference type="EMDB" id="EMD-31207"/>
<dbReference type="EMDB" id="EMD-31211"/>
<dbReference type="EMDB" id="EMD-34359"/>
<dbReference type="EMDB" id="EMD-34360"/>
<dbReference type="EMDB" id="EMD-41107"/>
<dbReference type="EMDB" id="EMD-41565"/>
<dbReference type="EMDB" id="EMD-41580"/>
<dbReference type="SMR" id="Q9ULK4"/>
<dbReference type="BioGRID" id="114829">
    <property type="interactions" value="269"/>
</dbReference>
<dbReference type="ComplexPortal" id="CPX-3227">
    <property type="entry name" value="Core mediator complex"/>
</dbReference>
<dbReference type="CORUM" id="Q9ULK4"/>
<dbReference type="DIP" id="DIP-31461N"/>
<dbReference type="FunCoup" id="Q9ULK4">
    <property type="interactions" value="3467"/>
</dbReference>
<dbReference type="IntAct" id="Q9ULK4">
    <property type="interactions" value="174"/>
</dbReference>
<dbReference type="MINT" id="Q9ULK4"/>
<dbReference type="STRING" id="9606.ENSP00000357047"/>
<dbReference type="BindingDB" id="Q9ULK4"/>
<dbReference type="ChEMBL" id="CHEMBL4146"/>
<dbReference type="GlyGen" id="Q9ULK4">
    <property type="glycosylation" value="2 sites, 1 O-linked glycan (2 sites)"/>
</dbReference>
<dbReference type="iPTMnet" id="Q9ULK4"/>
<dbReference type="PhosphoSitePlus" id="Q9ULK4"/>
<dbReference type="SwissPalm" id="Q9ULK4"/>
<dbReference type="BioMuta" id="MED23"/>
<dbReference type="DMDM" id="28558074"/>
<dbReference type="jPOST" id="Q9ULK4"/>
<dbReference type="MassIVE" id="Q9ULK4"/>
<dbReference type="PaxDb" id="9606-ENSP00000357047"/>
<dbReference type="PeptideAtlas" id="Q9ULK4"/>
<dbReference type="ProteomicsDB" id="7541"/>
<dbReference type="ProteomicsDB" id="85057">
    <molecule id="Q9ULK4-1"/>
</dbReference>
<dbReference type="ProteomicsDB" id="85058">
    <molecule id="Q9ULK4-2"/>
</dbReference>
<dbReference type="ProteomicsDB" id="85059">
    <molecule id="Q9ULK4-3"/>
</dbReference>
<dbReference type="ProteomicsDB" id="85060">
    <molecule id="Q9ULK4-4"/>
</dbReference>
<dbReference type="ProteomicsDB" id="85061">
    <molecule id="Q9ULK4-5"/>
</dbReference>
<dbReference type="Pumba" id="Q9ULK4"/>
<dbReference type="ABCD" id="Q9ULK4">
    <property type="antibodies" value="1 sequenced antibody"/>
</dbReference>
<dbReference type="Antibodypedia" id="19677">
    <property type="antibodies" value="244 antibodies from 33 providers"/>
</dbReference>
<dbReference type="DNASU" id="9439"/>
<dbReference type="Ensembl" id="ENST00000354577.8">
    <molecule id="Q9ULK4-3"/>
    <property type="protein sequence ID" value="ENSP00000346588.4"/>
    <property type="gene ID" value="ENSG00000112282.18"/>
</dbReference>
<dbReference type="Ensembl" id="ENST00000368053.8">
    <molecule id="Q9ULK4-2"/>
    <property type="protein sequence ID" value="ENSP00000357032.4"/>
    <property type="gene ID" value="ENSG00000112282.18"/>
</dbReference>
<dbReference type="Ensembl" id="ENST00000368060.7">
    <molecule id="Q9ULK4-5"/>
    <property type="protein sequence ID" value="ENSP00000357039.3"/>
    <property type="gene ID" value="ENSG00000112282.18"/>
</dbReference>
<dbReference type="Ensembl" id="ENST00000368068.8">
    <molecule id="Q9ULK4-1"/>
    <property type="protein sequence ID" value="ENSP00000357047.3"/>
    <property type="gene ID" value="ENSG00000112282.18"/>
</dbReference>
<dbReference type="Ensembl" id="ENST00000539158.1">
    <molecule id="Q9ULK4-6"/>
    <property type="protein sequence ID" value="ENSP00000445072.1"/>
    <property type="gene ID" value="ENSG00000112282.18"/>
</dbReference>
<dbReference type="GeneID" id="9439"/>
<dbReference type="KEGG" id="hsa:9439"/>
<dbReference type="MANE-Select" id="ENST00000368068.8">
    <property type="protein sequence ID" value="ENSP00000357047.3"/>
    <property type="RefSeq nucleotide sequence ID" value="NM_004830.4"/>
    <property type="RefSeq protein sequence ID" value="NP_004821.2"/>
</dbReference>
<dbReference type="UCSC" id="uc003qcq.5">
    <molecule id="Q9ULK4-1"/>
    <property type="organism name" value="human"/>
</dbReference>
<dbReference type="AGR" id="HGNC:2372"/>
<dbReference type="CTD" id="9439"/>
<dbReference type="DisGeNET" id="9439"/>
<dbReference type="GeneCards" id="MED23"/>
<dbReference type="HGNC" id="HGNC:2372">
    <property type="gene designation" value="MED23"/>
</dbReference>
<dbReference type="HPA" id="ENSG00000112282">
    <property type="expression patterns" value="Low tissue specificity"/>
</dbReference>
<dbReference type="MalaCards" id="MED23"/>
<dbReference type="MIM" id="605042">
    <property type="type" value="gene"/>
</dbReference>
<dbReference type="MIM" id="614249">
    <property type="type" value="phenotype"/>
</dbReference>
<dbReference type="neXtProt" id="NX_Q9ULK4"/>
<dbReference type="OpenTargets" id="ENSG00000112282"/>
<dbReference type="Orphanet" id="88616">
    <property type="disease" value="Autosomal recessive non-syndromic intellectual disability"/>
</dbReference>
<dbReference type="PharmGKB" id="PA162395499"/>
<dbReference type="VEuPathDB" id="HostDB:ENSG00000112282"/>
<dbReference type="eggNOG" id="KOG1883">
    <property type="taxonomic scope" value="Eukaryota"/>
</dbReference>
<dbReference type="GeneTree" id="ENSGT00390000010380"/>
<dbReference type="HOGENOM" id="CLU_002773_0_0_1"/>
<dbReference type="InParanoid" id="Q9ULK4"/>
<dbReference type="OMA" id="QKHQKQR"/>
<dbReference type="OrthoDB" id="9982951at2759"/>
<dbReference type="PAN-GO" id="Q9ULK4">
    <property type="GO annotations" value="4 GO annotations based on evolutionary models"/>
</dbReference>
<dbReference type="PhylomeDB" id="Q9ULK4"/>
<dbReference type="TreeFam" id="TF324163"/>
<dbReference type="PathwayCommons" id="Q9ULK4"/>
<dbReference type="Reactome" id="R-HSA-1989781">
    <property type="pathway name" value="PPARA activates gene expression"/>
</dbReference>
<dbReference type="Reactome" id="R-HSA-212436">
    <property type="pathway name" value="Generic Transcription Pathway"/>
</dbReference>
<dbReference type="Reactome" id="R-HSA-381340">
    <property type="pathway name" value="Transcriptional regulation of white adipocyte differentiation"/>
</dbReference>
<dbReference type="Reactome" id="R-HSA-9833110">
    <property type="pathway name" value="RSV-host interactions"/>
</dbReference>
<dbReference type="Reactome" id="R-HSA-9841922">
    <property type="pathway name" value="MLL4 and MLL3 complexes regulate expression of PPARG target genes in adipogenesis and hepatic steatosis"/>
</dbReference>
<dbReference type="SignaLink" id="Q9ULK4"/>
<dbReference type="SIGNOR" id="Q9ULK4"/>
<dbReference type="BioGRID-ORCS" id="9439">
    <property type="hits" value="181 hits in 1192 CRISPR screens"/>
</dbReference>
<dbReference type="ChiTaRS" id="MED23">
    <property type="organism name" value="human"/>
</dbReference>
<dbReference type="GeneWiki" id="CRSP3"/>
<dbReference type="GenomeRNAi" id="9439"/>
<dbReference type="Pharos" id="Q9ULK4">
    <property type="development level" value="Tbio"/>
</dbReference>
<dbReference type="PRO" id="PR:Q9ULK4"/>
<dbReference type="Proteomes" id="UP000005640">
    <property type="component" value="Chromosome 6"/>
</dbReference>
<dbReference type="RNAct" id="Q9ULK4">
    <property type="molecule type" value="protein"/>
</dbReference>
<dbReference type="Bgee" id="ENSG00000112282">
    <property type="expression patterns" value="Expressed in right hemisphere of cerebellum and 202 other cell types or tissues"/>
</dbReference>
<dbReference type="ExpressionAtlas" id="Q9ULK4">
    <property type="expression patterns" value="baseline and differential"/>
</dbReference>
<dbReference type="GO" id="GO:0070847">
    <property type="term" value="C:core mediator complex"/>
    <property type="evidence" value="ECO:0000353"/>
    <property type="project" value="ComplexPortal"/>
</dbReference>
<dbReference type="GO" id="GO:0016592">
    <property type="term" value="C:mediator complex"/>
    <property type="evidence" value="ECO:0000318"/>
    <property type="project" value="GO_Central"/>
</dbReference>
<dbReference type="GO" id="GO:0005654">
    <property type="term" value="C:nucleoplasm"/>
    <property type="evidence" value="ECO:0000304"/>
    <property type="project" value="Reactome"/>
</dbReference>
<dbReference type="GO" id="GO:0005634">
    <property type="term" value="C:nucleus"/>
    <property type="evidence" value="ECO:0000314"/>
    <property type="project" value="ComplexPortal"/>
</dbReference>
<dbReference type="GO" id="GO:0005667">
    <property type="term" value="C:transcription regulator complex"/>
    <property type="evidence" value="ECO:0000314"/>
    <property type="project" value="MGI"/>
</dbReference>
<dbReference type="GO" id="GO:0003713">
    <property type="term" value="F:transcription coactivator activity"/>
    <property type="evidence" value="ECO:0000304"/>
    <property type="project" value="ProtInc"/>
</dbReference>
<dbReference type="GO" id="GO:0010628">
    <property type="term" value="P:positive regulation of gene expression"/>
    <property type="evidence" value="ECO:0000318"/>
    <property type="project" value="GO_Central"/>
</dbReference>
<dbReference type="GO" id="GO:2000409">
    <property type="term" value="P:positive regulation of T cell extravasation"/>
    <property type="evidence" value="ECO:0007669"/>
    <property type="project" value="Ensembl"/>
</dbReference>
<dbReference type="GO" id="GO:0032968">
    <property type="term" value="P:positive regulation of transcription elongation by RNA polymerase II"/>
    <property type="evidence" value="ECO:0000303"/>
    <property type="project" value="ComplexPortal"/>
</dbReference>
<dbReference type="GO" id="GO:0060261">
    <property type="term" value="P:positive regulation of transcription initiation by RNA polymerase II"/>
    <property type="evidence" value="ECO:0000303"/>
    <property type="project" value="ComplexPortal"/>
</dbReference>
<dbReference type="GO" id="GO:0006355">
    <property type="term" value="P:regulation of DNA-templated transcription"/>
    <property type="evidence" value="ECO:0000314"/>
    <property type="project" value="MGI"/>
</dbReference>
<dbReference type="GO" id="GO:0006357">
    <property type="term" value="P:regulation of transcription by RNA polymerase II"/>
    <property type="evidence" value="ECO:0000318"/>
    <property type="project" value="GO_Central"/>
</dbReference>
<dbReference type="GO" id="GO:0051123">
    <property type="term" value="P:RNA polymerase II preinitiation complex assembly"/>
    <property type="evidence" value="ECO:0000303"/>
    <property type="project" value="ComplexPortal"/>
</dbReference>
<dbReference type="GO" id="GO:0006367">
    <property type="term" value="P:transcription initiation at RNA polymerase II promoter"/>
    <property type="evidence" value="ECO:0000304"/>
    <property type="project" value="ProtInc"/>
</dbReference>
<dbReference type="InterPro" id="IPR021629">
    <property type="entry name" value="Mediator_Med23"/>
</dbReference>
<dbReference type="PANTHER" id="PTHR12691">
    <property type="entry name" value="MEDIATOR OF RNA POLYMERASE II TRANSCRIPTION SUBUNIT 23"/>
    <property type="match status" value="1"/>
</dbReference>
<dbReference type="PANTHER" id="PTHR12691:SF10">
    <property type="entry name" value="MEDIATOR OF RNA POLYMERASE II TRANSCRIPTION SUBUNIT 23"/>
    <property type="match status" value="1"/>
</dbReference>
<dbReference type="Pfam" id="PF11573">
    <property type="entry name" value="Med23"/>
    <property type="match status" value="1"/>
</dbReference>
<gene>
    <name type="primary">MED23</name>
    <name type="synonym">ARC130</name>
    <name type="synonym">CRSP3</name>
    <name type="synonym">DRIP130</name>
    <name type="synonym">KIAA1216</name>
    <name type="synonym">SUR2</name>
</gene>
<reference key="1">
    <citation type="journal article" date="1999" name="Nature">
        <title>Ligand-dependent transcription activation by nuclear receptors requires the DRIP complex.</title>
        <authorList>
            <person name="Rachez C."/>
            <person name="Lemon B.D."/>
            <person name="Suldan Z."/>
            <person name="Bromleigh V."/>
            <person name="Gamble M."/>
            <person name="Naeaer A.M."/>
            <person name="Erdjument-Bromage H."/>
            <person name="Tempst P."/>
            <person name="Freedman L.P."/>
        </authorList>
    </citation>
    <scope>NUCLEOTIDE SEQUENCE [MRNA] (ISOFORM 1)</scope>
    <scope>PROTEIN SEQUENCE OF 254-280; 1317-1326 AND 1331-1337</scope>
    <scope>IDENTIFICATION IN ARC COMPLEX</scope>
    <source>
        <tissue>Cervix carcinoma</tissue>
    </source>
</reference>
<reference key="2">
    <citation type="journal article" date="1999" name="Nature">
        <title>Mammalian Srb/Mediator complex is targeted by adenovirus E1A protein.</title>
        <authorList>
            <person name="Boyer T.G."/>
            <person name="Martin M.E.D."/>
            <person name="Lees E."/>
            <person name="Ricciardi R.P."/>
            <person name="Berk A.J."/>
        </authorList>
    </citation>
    <scope>NUCLEOTIDE SEQUENCE [MRNA] (ISOFORM 5)</scope>
    <scope>FUNCTION</scope>
    <scope>INTERACTION WITH E1A AND CDK8</scope>
</reference>
<reference key="3">
    <citation type="journal article" date="1999" name="Nature">
        <title>The transcriptional cofactor complex CRSP is required for activity of the enhancer-binding protein Sp1.</title>
        <authorList>
            <person name="Ryu S."/>
            <person name="Zhou S."/>
            <person name="Ladurner A.G."/>
            <person name="Tjian R."/>
        </authorList>
    </citation>
    <scope>NUCLEOTIDE SEQUENCE [MRNA] (ISOFORM 2)</scope>
    <scope>IDENTIFICATION IN THE CRSP COMPLEX</scope>
</reference>
<reference key="4">
    <citation type="submission" date="2008-01" db="EMBL/GenBank/DDBJ databases">
        <title>Alternative splicing as a prevalent mechanism in regulating mammalian mediator tail subcomplex activity.</title>
        <authorList>
            <person name="Kivil A."/>
            <person name="Kazantseva A."/>
            <person name="Vinkel K.J.M."/>
            <person name="Sadam H."/>
            <person name="Neuman T."/>
            <person name="Palm K."/>
        </authorList>
    </citation>
    <scope>NUCLEOTIDE SEQUENCE [MRNA] (ISOFORM 6)</scope>
</reference>
<reference key="5">
    <citation type="journal article" date="1999" name="DNA Res.">
        <title>Prediction of the coding sequences of unidentified human genes. XV. The complete sequences of 100 new cDNA clones from brain which code for large proteins in vitro.</title>
        <authorList>
            <person name="Nagase T."/>
            <person name="Ishikawa K."/>
            <person name="Kikuno R."/>
            <person name="Hirosawa M."/>
            <person name="Nomura N."/>
            <person name="Ohara O."/>
        </authorList>
    </citation>
    <scope>NUCLEOTIDE SEQUENCE [LARGE SCALE MRNA] (ISOFORM 1)</scope>
    <source>
        <tissue>Brain</tissue>
    </source>
</reference>
<reference key="6">
    <citation type="journal article" date="2001" name="Genome Res.">
        <title>Towards a catalog of human genes and proteins: sequencing and analysis of 500 novel complete protein coding human cDNAs.</title>
        <authorList>
            <person name="Wiemann S."/>
            <person name="Weil B."/>
            <person name="Wellenreuther R."/>
            <person name="Gassenhuber J."/>
            <person name="Glassl S."/>
            <person name="Ansorge W."/>
            <person name="Boecher M."/>
            <person name="Bloecker H."/>
            <person name="Bauersachs S."/>
            <person name="Blum H."/>
            <person name="Lauber J."/>
            <person name="Duesterhoeft A."/>
            <person name="Beyer A."/>
            <person name="Koehrer K."/>
            <person name="Strack N."/>
            <person name="Mewes H.-W."/>
            <person name="Ottenwaelder B."/>
            <person name="Obermaier B."/>
            <person name="Tampe J."/>
            <person name="Heubner D."/>
            <person name="Wambutt R."/>
            <person name="Korn B."/>
            <person name="Klein M."/>
            <person name="Poustka A."/>
        </authorList>
    </citation>
    <scope>NUCLEOTIDE SEQUENCE [LARGE SCALE MRNA] (ISOFORM 3)</scope>
    <source>
        <tissue>Testis</tissue>
    </source>
</reference>
<reference key="7">
    <citation type="journal article" date="2003" name="Nature">
        <title>The DNA sequence and analysis of human chromosome 6.</title>
        <authorList>
            <person name="Mungall A.J."/>
            <person name="Palmer S.A."/>
            <person name="Sims S.K."/>
            <person name="Edwards C.A."/>
            <person name="Ashurst J.L."/>
            <person name="Wilming L."/>
            <person name="Jones M.C."/>
            <person name="Horton R."/>
            <person name="Hunt S.E."/>
            <person name="Scott C.E."/>
            <person name="Gilbert J.G.R."/>
            <person name="Clamp M.E."/>
            <person name="Bethel G."/>
            <person name="Milne S."/>
            <person name="Ainscough R."/>
            <person name="Almeida J.P."/>
            <person name="Ambrose K.D."/>
            <person name="Andrews T.D."/>
            <person name="Ashwell R.I.S."/>
            <person name="Babbage A.K."/>
            <person name="Bagguley C.L."/>
            <person name="Bailey J."/>
            <person name="Banerjee R."/>
            <person name="Barker D.J."/>
            <person name="Barlow K.F."/>
            <person name="Bates K."/>
            <person name="Beare D.M."/>
            <person name="Beasley H."/>
            <person name="Beasley O."/>
            <person name="Bird C.P."/>
            <person name="Blakey S.E."/>
            <person name="Bray-Allen S."/>
            <person name="Brook J."/>
            <person name="Brown A.J."/>
            <person name="Brown J.Y."/>
            <person name="Burford D.C."/>
            <person name="Burrill W."/>
            <person name="Burton J."/>
            <person name="Carder C."/>
            <person name="Carter N.P."/>
            <person name="Chapman J.C."/>
            <person name="Clark S.Y."/>
            <person name="Clark G."/>
            <person name="Clee C.M."/>
            <person name="Clegg S."/>
            <person name="Cobley V."/>
            <person name="Collier R.E."/>
            <person name="Collins J.E."/>
            <person name="Colman L.K."/>
            <person name="Corby N.R."/>
            <person name="Coville G.J."/>
            <person name="Culley K.M."/>
            <person name="Dhami P."/>
            <person name="Davies J."/>
            <person name="Dunn M."/>
            <person name="Earthrowl M.E."/>
            <person name="Ellington A.E."/>
            <person name="Evans K.A."/>
            <person name="Faulkner L."/>
            <person name="Francis M.D."/>
            <person name="Frankish A."/>
            <person name="Frankland J."/>
            <person name="French L."/>
            <person name="Garner P."/>
            <person name="Garnett J."/>
            <person name="Ghori M.J."/>
            <person name="Gilby L.M."/>
            <person name="Gillson C.J."/>
            <person name="Glithero R.J."/>
            <person name="Grafham D.V."/>
            <person name="Grant M."/>
            <person name="Gribble S."/>
            <person name="Griffiths C."/>
            <person name="Griffiths M.N.D."/>
            <person name="Hall R."/>
            <person name="Halls K.S."/>
            <person name="Hammond S."/>
            <person name="Harley J.L."/>
            <person name="Hart E.A."/>
            <person name="Heath P.D."/>
            <person name="Heathcott R."/>
            <person name="Holmes S.J."/>
            <person name="Howden P.J."/>
            <person name="Howe K.L."/>
            <person name="Howell G.R."/>
            <person name="Huckle E."/>
            <person name="Humphray S.J."/>
            <person name="Humphries M.D."/>
            <person name="Hunt A.R."/>
            <person name="Johnson C.M."/>
            <person name="Joy A.A."/>
            <person name="Kay M."/>
            <person name="Keenan S.J."/>
            <person name="Kimberley A.M."/>
            <person name="King A."/>
            <person name="Laird G.K."/>
            <person name="Langford C."/>
            <person name="Lawlor S."/>
            <person name="Leongamornlert D.A."/>
            <person name="Leversha M."/>
            <person name="Lloyd C.R."/>
            <person name="Lloyd D.M."/>
            <person name="Loveland J.E."/>
            <person name="Lovell J."/>
            <person name="Martin S."/>
            <person name="Mashreghi-Mohammadi M."/>
            <person name="Maslen G.L."/>
            <person name="Matthews L."/>
            <person name="McCann O.T."/>
            <person name="McLaren S.J."/>
            <person name="McLay K."/>
            <person name="McMurray A."/>
            <person name="Moore M.J.F."/>
            <person name="Mullikin J.C."/>
            <person name="Niblett D."/>
            <person name="Nickerson T."/>
            <person name="Novik K.L."/>
            <person name="Oliver K."/>
            <person name="Overton-Larty E.K."/>
            <person name="Parker A."/>
            <person name="Patel R."/>
            <person name="Pearce A.V."/>
            <person name="Peck A.I."/>
            <person name="Phillimore B.J.C.T."/>
            <person name="Phillips S."/>
            <person name="Plumb R.W."/>
            <person name="Porter K.M."/>
            <person name="Ramsey Y."/>
            <person name="Ranby S.A."/>
            <person name="Rice C.M."/>
            <person name="Ross M.T."/>
            <person name="Searle S.M."/>
            <person name="Sehra H.K."/>
            <person name="Sheridan E."/>
            <person name="Skuce C.D."/>
            <person name="Smith S."/>
            <person name="Smith M."/>
            <person name="Spraggon L."/>
            <person name="Squares S.L."/>
            <person name="Steward C.A."/>
            <person name="Sycamore N."/>
            <person name="Tamlyn-Hall G."/>
            <person name="Tester J."/>
            <person name="Theaker A.J."/>
            <person name="Thomas D.W."/>
            <person name="Thorpe A."/>
            <person name="Tracey A."/>
            <person name="Tromans A."/>
            <person name="Tubby B."/>
            <person name="Wall M."/>
            <person name="Wallis J.M."/>
            <person name="West A.P."/>
            <person name="White S.S."/>
            <person name="Whitehead S.L."/>
            <person name="Whittaker H."/>
            <person name="Wild A."/>
            <person name="Willey D.J."/>
            <person name="Wilmer T.E."/>
            <person name="Wood J.M."/>
            <person name="Wray P.W."/>
            <person name="Wyatt J.C."/>
            <person name="Young L."/>
            <person name="Younger R.M."/>
            <person name="Bentley D.R."/>
            <person name="Coulson A."/>
            <person name="Durbin R.M."/>
            <person name="Hubbard T."/>
            <person name="Sulston J.E."/>
            <person name="Dunham I."/>
            <person name="Rogers J."/>
            <person name="Beck S."/>
        </authorList>
    </citation>
    <scope>NUCLEOTIDE SEQUENCE [LARGE SCALE GENOMIC DNA]</scope>
</reference>
<reference key="8">
    <citation type="submission" date="2005-09" db="EMBL/GenBank/DDBJ databases">
        <authorList>
            <person name="Mural R.J."/>
            <person name="Istrail S."/>
            <person name="Sutton G.G."/>
            <person name="Florea L."/>
            <person name="Halpern A.L."/>
            <person name="Mobarry C.M."/>
            <person name="Lippert R."/>
            <person name="Walenz B."/>
            <person name="Shatkay H."/>
            <person name="Dew I."/>
            <person name="Miller J.R."/>
            <person name="Flanigan M.J."/>
            <person name="Edwards N.J."/>
            <person name="Bolanos R."/>
            <person name="Fasulo D."/>
            <person name="Halldorsson B.V."/>
            <person name="Hannenhalli S."/>
            <person name="Turner R."/>
            <person name="Yooseph S."/>
            <person name="Lu F."/>
            <person name="Nusskern D.R."/>
            <person name="Shue B.C."/>
            <person name="Zheng X.H."/>
            <person name="Zhong F."/>
            <person name="Delcher A.L."/>
            <person name="Huson D.H."/>
            <person name="Kravitz S.A."/>
            <person name="Mouchard L."/>
            <person name="Reinert K."/>
            <person name="Remington K.A."/>
            <person name="Clark A.G."/>
            <person name="Waterman M.S."/>
            <person name="Eichler E.E."/>
            <person name="Adams M.D."/>
            <person name="Hunkapiller M.W."/>
            <person name="Myers E.W."/>
            <person name="Venter J.C."/>
        </authorList>
    </citation>
    <scope>NUCLEOTIDE SEQUENCE [LARGE SCALE GENOMIC DNA]</scope>
</reference>
<reference key="9">
    <citation type="journal article" date="2004" name="Genome Res.">
        <title>The status, quality, and expansion of the NIH full-length cDNA project: the Mammalian Gene Collection (MGC).</title>
        <authorList>
            <consortium name="The MGC Project Team"/>
        </authorList>
    </citation>
    <scope>NUCLEOTIDE SEQUENCE [LARGE SCALE MRNA] (ISOFORM 4)</scope>
    <source>
        <tissue>Placenta</tissue>
    </source>
</reference>
<reference key="10">
    <citation type="journal article" date="1999" name="Nature">
        <title>Composite co-activator ARC mediates chromatin-directed transcriptional activation.</title>
        <authorList>
            <person name="Naeaer A.M."/>
            <person name="Beaurang P.A."/>
            <person name="Zhou S."/>
            <person name="Abraham S."/>
            <person name="Solomon W.B."/>
            <person name="Tjian R."/>
        </authorList>
    </citation>
    <scope>IDENTIFICATION IN THE ARC COMPLEX</scope>
    <scope>PROTEIN SEQUENCE OF 465-473 AND 1302-1311</scope>
</reference>
<reference key="11">
    <citation type="journal article" date="2000" name="Nature">
        <title>TFIIH is negatively regulated by cdk8-containing mediator complexes.</title>
        <authorList>
            <person name="Akoulitchev S."/>
            <person name="Chuikov S."/>
            <person name="Reinberg D."/>
        </authorList>
    </citation>
    <scope>INTERACTION WITH MED6</scope>
</reference>
<reference key="12">
    <citation type="journal article" date="2002" name="Proc. Natl. Acad. Sci. U.S.A.">
        <title>The TRAP/Mediator coactivator complex interacts directly with estrogen receptors alpha and beta through the TRAP220 subunit and directly enhances estrogen receptor function in vitro.</title>
        <authorList>
            <person name="Kang Y.K."/>
            <person name="Guermah M."/>
            <person name="Yuan C.-X."/>
            <person name="Roeder R.G."/>
        </authorList>
    </citation>
    <scope>IDENTIFICATION BY MASS SPECTROMETRY</scope>
    <scope>IDENTIFICATION IN THE MEDIATOR COMPLEX</scope>
</reference>
<reference key="13">
    <citation type="journal article" date="2004" name="Mol. Cell">
        <title>Ras induces mediator complex exchange on C/EBP beta.</title>
        <authorList>
            <person name="Mo X."/>
            <person name="Kowenz-Leutz E."/>
            <person name="Xu H."/>
            <person name="Leutz A."/>
        </authorList>
    </citation>
    <scope>FUNCTION</scope>
    <scope>INTERACTION WITH CEBPB</scope>
</reference>
<reference key="14">
    <citation type="journal article" date="2004" name="Mol. Cell">
        <title>A set of consensus mammalian mediator subunits identified by multidimensional protein identification technology.</title>
        <authorList>
            <person name="Sato S."/>
            <person name="Tomomori-Sato C."/>
            <person name="Parmely T.J."/>
            <person name="Florens L."/>
            <person name="Zybailov B."/>
            <person name="Swanson S.K."/>
            <person name="Banks C.A.S."/>
            <person name="Jin J."/>
            <person name="Cai Y."/>
            <person name="Washburn M.P."/>
            <person name="Conaway J.W."/>
            <person name="Conaway R.C."/>
        </authorList>
    </citation>
    <scope>IDENTIFICATION BY MASS SPECTROMETRY</scope>
    <scope>IDENTIFICATION IN THE MEDIATOR COMPLEX</scope>
</reference>
<reference key="15">
    <citation type="journal article" date="2005" name="Mol. Cell">
        <title>MED1/TRAP220 exists predominantly in a TRAP/Mediator subpopulation enriched in RNA polymerase II and is required for ER-mediated transcription.</title>
        <authorList>
            <person name="Zhang X."/>
            <person name="Krutchinsky A."/>
            <person name="Fukuda A."/>
            <person name="Chen W."/>
            <person name="Yamamura S."/>
            <person name="Chait B.T."/>
            <person name="Roeder R.G."/>
        </authorList>
    </citation>
    <scope>INTERACTION WITH MED1 AND MED10</scope>
    <scope>IDENTIFICATION BY MASS SPECTROMETRY</scope>
    <scope>IDENTIFICATION IN THE MEDIATOR COMPLEX</scope>
    <scope>ASSOCIATION OF THE MEDIATOR COMPLEX WITH RNA POLYMERASE II</scope>
</reference>
<reference key="16">
    <citation type="journal article" date="2006" name="Mol. Cell. Biol.">
        <title>Mediator modulates Gli3-dependent Sonic hedgehog signaling.</title>
        <authorList>
            <person name="Zhou H."/>
            <person name="Kim S."/>
            <person name="Ishii S."/>
            <person name="Boyer T.G."/>
        </authorList>
    </citation>
    <scope>INTERACTION WITH CDK8; CTNNB1 AND GLI3</scope>
</reference>
<reference key="17">
    <citation type="journal article" date="2006" name="J. Biol. Chem.">
        <title>Human Mediator enhances basal transcription by facilitating recruitment of transcription factor IIB during preinitiation complex assembly.</title>
        <authorList>
            <person name="Baek H.J."/>
            <person name="Kang Y.K."/>
            <person name="Roeder R.G."/>
        </authorList>
    </citation>
    <scope>FUNCTION</scope>
    <scope>INTERACTION WITH MED1 AND MED10</scope>
</reference>
<reference key="18">
    <citation type="journal article" date="2009" name="Anal. Chem.">
        <title>Lys-N and trypsin cover complementary parts of the phosphoproteome in a refined SCX-based approach.</title>
        <authorList>
            <person name="Gauci S."/>
            <person name="Helbig A.O."/>
            <person name="Slijper M."/>
            <person name="Krijgsveld J."/>
            <person name="Heck A.J."/>
            <person name="Mohammed S."/>
        </authorList>
    </citation>
    <scope>IDENTIFICATION BY MASS SPECTROMETRY [LARGE SCALE ANALYSIS]</scope>
</reference>
<reference key="19">
    <citation type="journal article" date="2010" name="EMBO J.">
        <title>Crosstalk between C/EBPbeta phosphorylation, arginine methylation, and SWI/SNF/Mediator implies an indexing transcription factor code.</title>
        <authorList>
            <person name="Kowenz-Leutz E."/>
            <person name="Pless O."/>
            <person name="Dittmar G."/>
            <person name="Knoblich M."/>
            <person name="Leutz A."/>
        </authorList>
    </citation>
    <scope>INTERACTION WITH CEBPB</scope>
</reference>
<reference key="20">
    <citation type="journal article" date="2011" name="BMC Syst. Biol.">
        <title>Initial characterization of the human central proteome.</title>
        <authorList>
            <person name="Burkard T.R."/>
            <person name="Planyavsky M."/>
            <person name="Kaupe I."/>
            <person name="Breitwieser F.P."/>
            <person name="Buerckstuemmer T."/>
            <person name="Bennett K.L."/>
            <person name="Superti-Furga G."/>
            <person name="Colinge J."/>
        </authorList>
    </citation>
    <scope>IDENTIFICATION BY MASS SPECTROMETRY [LARGE SCALE ANALYSIS]</scope>
</reference>
<reference key="21">
    <citation type="journal article" date="2011" name="Science">
        <title>MED23 mutation links intellectual disability to dysregulation of immediate early gene expression.</title>
        <authorList>
            <person name="Hashimoto S."/>
            <person name="Boissel S."/>
            <person name="Zarhrate M."/>
            <person name="Rio M."/>
            <person name="Munnich A."/>
            <person name="Egly J.M."/>
            <person name="Colleaux L."/>
        </authorList>
    </citation>
    <scope>INVOLVEMENT IN MRT18</scope>
    <scope>VARIANT MRT18 GLN-611</scope>
    <scope>CHARACTERIZATION OF VARIANT MRT18 GLN-611</scope>
</reference>
<accession>Q9ULK4</accession>
<accession>B9TX55</accession>
<accession>O95403</accession>
<accession>Q5JWT3</accession>
<accession>Q5JWT4</accession>
<accession>Q6P9H6</accession>
<accession>Q9H0J2</accession>
<accession>Q9NTT9</accession>
<accession>Q9NTU0</accession>
<accession>Q9Y5P7</accession>
<accession>Q9Y667</accession>
<protein>
    <recommendedName>
        <fullName>Mediator of RNA polymerase II transcription subunit 23</fullName>
    </recommendedName>
    <alternativeName>
        <fullName>Activator-recruited cofactor 130 kDa component</fullName>
        <shortName>ARC130</shortName>
    </alternativeName>
    <alternativeName>
        <fullName>Cofactor required for Sp1 transcriptional activation subunit 3</fullName>
        <shortName>CRSP complex subunit 3</shortName>
    </alternativeName>
    <alternativeName>
        <fullName>Mediator complex subunit 23</fullName>
    </alternativeName>
    <alternativeName>
        <fullName>Protein sur-2 homolog</fullName>
        <shortName>hSur-2</shortName>
    </alternativeName>
    <alternativeName>
        <fullName>Transcriptional coactivator CRSP130</fullName>
    </alternativeName>
    <alternativeName>
        <fullName>Vitamin D3 receptor-interacting protein complex 130 kDa component</fullName>
        <shortName>DRIP130</shortName>
    </alternativeName>
</protein>
<organism>
    <name type="scientific">Homo sapiens</name>
    <name type="common">Human</name>
    <dbReference type="NCBI Taxonomy" id="9606"/>
    <lineage>
        <taxon>Eukaryota</taxon>
        <taxon>Metazoa</taxon>
        <taxon>Chordata</taxon>
        <taxon>Craniata</taxon>
        <taxon>Vertebrata</taxon>
        <taxon>Euteleostomi</taxon>
        <taxon>Mammalia</taxon>
        <taxon>Eutheria</taxon>
        <taxon>Euarchontoglires</taxon>
        <taxon>Primates</taxon>
        <taxon>Haplorrhini</taxon>
        <taxon>Catarrhini</taxon>
        <taxon>Hominidae</taxon>
        <taxon>Homo</taxon>
    </lineage>
</organism>
<evidence type="ECO:0000250" key="1"/>
<evidence type="ECO:0000250" key="2">
    <source>
        <dbReference type="UniProtKB" id="Q80YQ2"/>
    </source>
</evidence>
<evidence type="ECO:0000256" key="3">
    <source>
        <dbReference type="SAM" id="MobiDB-lite"/>
    </source>
</evidence>
<evidence type="ECO:0000269" key="4">
    <source>
    </source>
</evidence>
<evidence type="ECO:0000269" key="5">
    <source>
    </source>
</evidence>
<evidence type="ECO:0000269" key="6">
    <source>
    </source>
</evidence>
<evidence type="ECO:0000269" key="7">
    <source>
    </source>
</evidence>
<evidence type="ECO:0000269" key="8">
    <source>
    </source>
</evidence>
<evidence type="ECO:0000269" key="9">
    <source>
    </source>
</evidence>
<evidence type="ECO:0000269" key="10">
    <source>
    </source>
</evidence>
<evidence type="ECO:0000269" key="11">
    <source>
    </source>
</evidence>
<evidence type="ECO:0000269" key="12">
    <source>
    </source>
</evidence>
<evidence type="ECO:0000269" key="13">
    <source>
    </source>
</evidence>
<evidence type="ECO:0000269" key="14">
    <source>
    </source>
</evidence>
<evidence type="ECO:0000269" key="15">
    <source>
    </source>
</evidence>
<evidence type="ECO:0000269" key="16">
    <source>
    </source>
</evidence>
<evidence type="ECO:0000303" key="17">
    <source>
    </source>
</evidence>
<evidence type="ECO:0000303" key="18">
    <source>
    </source>
</evidence>
<evidence type="ECO:0000303" key="19">
    <source>
    </source>
</evidence>
<evidence type="ECO:0000303" key="20">
    <source>
    </source>
</evidence>
<evidence type="ECO:0000303" key="21">
    <source ref="4"/>
</evidence>
<evidence type="ECO:0000305" key="22"/>
<evidence type="ECO:0007829" key="23">
    <source>
        <dbReference type="PDB" id="6H02"/>
    </source>
</evidence>
<evidence type="ECO:0007829" key="24">
    <source>
        <dbReference type="PDB" id="7EMF"/>
    </source>
</evidence>
<feature type="chain" id="PRO_0000079358" description="Mediator of RNA polymerase II transcription subunit 23">
    <location>
        <begin position="1"/>
        <end position="1368"/>
    </location>
</feature>
<feature type="region of interest" description="Disordered" evidence="3">
    <location>
        <begin position="1343"/>
        <end position="1368"/>
    </location>
</feature>
<feature type="compositionally biased region" description="Polar residues" evidence="3">
    <location>
        <begin position="1347"/>
        <end position="1368"/>
    </location>
</feature>
<feature type="splice variant" id="VSP_004034" description="In isoform 2 and isoform 3." evidence="18 20">
    <original>Q</original>
    <variation>QTLNIAQ</variation>
    <location>
        <position position="292"/>
    </location>
</feature>
<feature type="splice variant" id="VSP_047860" description="In isoform 6." evidence="21">
    <original>FLQQSLRNKSLQMNDYKIA</original>
    <variation>SAFANCFQITCMGDLTHTP</variation>
    <location>
        <begin position="457"/>
        <end position="475"/>
    </location>
</feature>
<feature type="splice variant" id="VSP_047861" description="In isoform 6." evidence="21">
    <location>
        <begin position="476"/>
        <end position="1368"/>
    </location>
</feature>
<feature type="splice variant" id="VSP_004036" description="In isoform 2." evidence="20">
    <original>AMRSHEGNEAQ</original>
    <variation>VRINTFLSLFS</variation>
    <location>
        <begin position="870"/>
        <end position="880"/>
    </location>
</feature>
<feature type="splice variant" id="VSP_004037" description="In isoform 2." evidence="20">
    <location>
        <begin position="881"/>
        <end position="1368"/>
    </location>
</feature>
<feature type="splice variant" id="VSP_004035" description="In isoform 3 and isoform 4." evidence="18 19">
    <location>
        <begin position="1360"/>
        <end position="1368"/>
    </location>
</feature>
<feature type="splice variant" id="VSP_028380" description="In isoform 5." evidence="17">
    <original>PVSLPVTQ</original>
    <variation>DTLT</variation>
    <location>
        <begin position="1361"/>
        <end position="1368"/>
    </location>
</feature>
<feature type="sequence variant" id="VAR_082644" description="In MRT18; specifically impairs the response of JUN and FOS immediate early genes to serum mitogens by altering the interaction between enhancer-bound transcription factors TCF7L2 and ELK1 and the Mediator complex; dbSNP:rs370667926." evidence="15">
    <original>R</original>
    <variation>Q</variation>
    <location>
        <position position="611"/>
    </location>
</feature>
<feature type="sequence conflict" description="In Ref. 9; AAH60759." evidence="22" ref="9">
    <original>C</original>
    <variation>W</variation>
    <location>
        <position position="59"/>
    </location>
</feature>
<feature type="sequence conflict" description="In Ref. 1; AAD31729." evidence="22" ref="1">
    <original>Y</original>
    <variation>N</variation>
    <location>
        <position position="131"/>
    </location>
</feature>
<feature type="sequence conflict" description="In Ref. 2; AAD30202." evidence="22" ref="2">
    <original>F</original>
    <variation>V</variation>
    <location>
        <position position="208"/>
    </location>
</feature>
<feature type="sequence conflict" description="In Ref. 2; AAD30202." evidence="22" ref="2">
    <original>V</original>
    <variation>E</variation>
    <location>
        <position position="230"/>
    </location>
</feature>
<feature type="sequence conflict" description="In Ref. 2; AAD30202." evidence="22" ref="2">
    <original>N</original>
    <variation>H</variation>
    <location>
        <position position="464"/>
    </location>
</feature>
<feature type="sequence conflict" description="In Ref. 2; AAD30202." evidence="22" ref="2">
    <original>F</original>
    <variation>V</variation>
    <location>
        <position position="488"/>
    </location>
</feature>
<feature type="sequence conflict" description="In Ref. 2; AAD30202." evidence="22" ref="2">
    <original>I</original>
    <variation>L</variation>
    <location>
        <position position="507"/>
    </location>
</feature>
<feature type="sequence conflict" description="In Ref. 2; AAD30202." evidence="22" ref="2">
    <original>G</original>
    <variation>A</variation>
    <location>
        <position position="518"/>
    </location>
</feature>
<feature type="helix" evidence="23">
    <location>
        <begin position="2"/>
        <end position="21"/>
    </location>
</feature>
<feature type="strand" evidence="23">
    <location>
        <begin position="24"/>
        <end position="26"/>
    </location>
</feature>
<feature type="strand" evidence="23">
    <location>
        <begin position="32"/>
        <end position="34"/>
    </location>
</feature>
<feature type="helix" evidence="23">
    <location>
        <begin position="35"/>
        <end position="40"/>
    </location>
</feature>
<feature type="helix" evidence="23">
    <location>
        <begin position="42"/>
        <end position="49"/>
    </location>
</feature>
<feature type="helix" evidence="23">
    <location>
        <begin position="56"/>
        <end position="68"/>
    </location>
</feature>
<feature type="helix" evidence="23">
    <location>
        <begin position="73"/>
        <end position="88"/>
    </location>
</feature>
<feature type="helix" evidence="23">
    <location>
        <begin position="94"/>
        <end position="103"/>
    </location>
</feature>
<feature type="helix" evidence="23">
    <location>
        <begin position="112"/>
        <end position="125"/>
    </location>
</feature>
<feature type="helix" evidence="23">
    <location>
        <begin position="126"/>
        <end position="128"/>
    </location>
</feature>
<feature type="helix" evidence="23">
    <location>
        <begin position="131"/>
        <end position="146"/>
    </location>
</feature>
<feature type="strand" evidence="24">
    <location>
        <begin position="154"/>
        <end position="156"/>
    </location>
</feature>
<feature type="helix" evidence="23">
    <location>
        <begin position="157"/>
        <end position="160"/>
    </location>
</feature>
<feature type="helix" evidence="23">
    <location>
        <begin position="162"/>
        <end position="170"/>
    </location>
</feature>
<feature type="turn" evidence="23">
    <location>
        <begin position="173"/>
        <end position="176"/>
    </location>
</feature>
<feature type="helix" evidence="23">
    <location>
        <begin position="180"/>
        <end position="190"/>
    </location>
</feature>
<feature type="turn" evidence="23">
    <location>
        <begin position="199"/>
        <end position="202"/>
    </location>
</feature>
<feature type="helix" evidence="23">
    <location>
        <begin position="203"/>
        <end position="210"/>
    </location>
</feature>
<feature type="helix" evidence="23">
    <location>
        <begin position="213"/>
        <end position="218"/>
    </location>
</feature>
<feature type="helix" evidence="23">
    <location>
        <begin position="224"/>
        <end position="226"/>
    </location>
</feature>
<feature type="helix" evidence="23">
    <location>
        <begin position="239"/>
        <end position="241"/>
    </location>
</feature>
<feature type="turn" evidence="23">
    <location>
        <begin position="245"/>
        <end position="247"/>
    </location>
</feature>
<feature type="strand" evidence="23">
    <location>
        <begin position="253"/>
        <end position="255"/>
    </location>
</feature>
<feature type="helix" evidence="23">
    <location>
        <begin position="260"/>
        <end position="263"/>
    </location>
</feature>
<feature type="helix" evidence="23">
    <location>
        <begin position="267"/>
        <end position="274"/>
    </location>
</feature>
<feature type="helix" evidence="23">
    <location>
        <begin position="280"/>
        <end position="287"/>
    </location>
</feature>
<feature type="strand" evidence="24">
    <location>
        <begin position="291"/>
        <end position="293"/>
    </location>
</feature>
<feature type="helix" evidence="23">
    <location>
        <begin position="298"/>
        <end position="315"/>
    </location>
</feature>
<feature type="strand" evidence="24">
    <location>
        <begin position="319"/>
        <end position="324"/>
    </location>
</feature>
<feature type="helix" evidence="23">
    <location>
        <begin position="328"/>
        <end position="343"/>
    </location>
</feature>
<feature type="helix" evidence="23">
    <location>
        <begin position="349"/>
        <end position="360"/>
    </location>
</feature>
<feature type="turn" evidence="24">
    <location>
        <begin position="361"/>
        <end position="363"/>
    </location>
</feature>
<feature type="helix" evidence="23">
    <location>
        <begin position="369"/>
        <end position="383"/>
    </location>
</feature>
<feature type="turn" evidence="23">
    <location>
        <begin position="384"/>
        <end position="386"/>
    </location>
</feature>
<feature type="helix" evidence="23">
    <location>
        <begin position="389"/>
        <end position="391"/>
    </location>
</feature>
<feature type="turn" evidence="23">
    <location>
        <begin position="392"/>
        <end position="394"/>
    </location>
</feature>
<feature type="helix" evidence="23">
    <location>
        <begin position="395"/>
        <end position="402"/>
    </location>
</feature>
<feature type="helix" evidence="23">
    <location>
        <begin position="419"/>
        <end position="422"/>
    </location>
</feature>
<feature type="helix" evidence="23">
    <location>
        <begin position="424"/>
        <end position="437"/>
    </location>
</feature>
<feature type="helix" evidence="23">
    <location>
        <begin position="452"/>
        <end position="462"/>
    </location>
</feature>
<feature type="strand" evidence="23">
    <location>
        <begin position="469"/>
        <end position="472"/>
    </location>
</feature>
<feature type="helix" evidence="23">
    <location>
        <begin position="473"/>
        <end position="480"/>
    </location>
</feature>
<feature type="turn" evidence="24">
    <location>
        <begin position="481"/>
        <end position="483"/>
    </location>
</feature>
<feature type="turn" evidence="23">
    <location>
        <begin position="485"/>
        <end position="488"/>
    </location>
</feature>
<feature type="helix" evidence="23">
    <location>
        <begin position="489"/>
        <end position="500"/>
    </location>
</feature>
<feature type="strand" evidence="23">
    <location>
        <begin position="506"/>
        <end position="508"/>
    </location>
</feature>
<feature type="strand" evidence="23">
    <location>
        <begin position="510"/>
        <end position="513"/>
    </location>
</feature>
<feature type="strand" evidence="23">
    <location>
        <begin position="515"/>
        <end position="518"/>
    </location>
</feature>
<feature type="helix" evidence="23">
    <location>
        <begin position="525"/>
        <end position="528"/>
    </location>
</feature>
<feature type="helix" evidence="23">
    <location>
        <begin position="533"/>
        <end position="552"/>
    </location>
</feature>
<feature type="strand" evidence="24">
    <location>
        <begin position="556"/>
        <end position="558"/>
    </location>
</feature>
<feature type="helix" evidence="23">
    <location>
        <begin position="561"/>
        <end position="570"/>
    </location>
</feature>
<feature type="helix" evidence="23">
    <location>
        <begin position="574"/>
        <end position="576"/>
    </location>
</feature>
<feature type="turn" evidence="23">
    <location>
        <begin position="577"/>
        <end position="580"/>
    </location>
</feature>
<feature type="helix" evidence="23">
    <location>
        <begin position="581"/>
        <end position="586"/>
    </location>
</feature>
<feature type="helix" evidence="23">
    <location>
        <begin position="588"/>
        <end position="594"/>
    </location>
</feature>
<feature type="helix" evidence="23">
    <location>
        <begin position="599"/>
        <end position="611"/>
    </location>
</feature>
<feature type="helix" evidence="23">
    <location>
        <begin position="617"/>
        <end position="632"/>
    </location>
</feature>
<feature type="helix" evidence="23">
    <location>
        <begin position="639"/>
        <end position="654"/>
    </location>
</feature>
<feature type="turn" evidence="23">
    <location>
        <begin position="658"/>
        <end position="660"/>
    </location>
</feature>
<feature type="helix" evidence="23">
    <location>
        <begin position="661"/>
        <end position="665"/>
    </location>
</feature>
<feature type="helix" evidence="23">
    <location>
        <begin position="666"/>
        <end position="668"/>
    </location>
</feature>
<feature type="helix" evidence="23">
    <location>
        <begin position="672"/>
        <end position="675"/>
    </location>
</feature>
<feature type="helix" evidence="23">
    <location>
        <begin position="681"/>
        <end position="697"/>
    </location>
</feature>
<feature type="helix" evidence="23">
    <location>
        <begin position="712"/>
        <end position="720"/>
    </location>
</feature>
<feature type="helix" evidence="23">
    <location>
        <begin position="729"/>
        <end position="732"/>
    </location>
</feature>
<feature type="helix" evidence="23">
    <location>
        <begin position="737"/>
        <end position="744"/>
    </location>
</feature>
<feature type="helix" evidence="23">
    <location>
        <begin position="753"/>
        <end position="767"/>
    </location>
</feature>
<feature type="helix" evidence="23">
    <location>
        <begin position="773"/>
        <end position="780"/>
    </location>
</feature>
<feature type="helix" evidence="23">
    <location>
        <begin position="789"/>
        <end position="799"/>
    </location>
</feature>
<feature type="helix" evidence="23">
    <location>
        <begin position="805"/>
        <end position="814"/>
    </location>
</feature>
<feature type="helix" evidence="23">
    <location>
        <begin position="816"/>
        <end position="835"/>
    </location>
</feature>
<feature type="helix" evidence="23">
    <location>
        <begin position="841"/>
        <end position="855"/>
    </location>
</feature>
<feature type="helix" evidence="23">
    <location>
        <begin position="862"/>
        <end position="870"/>
    </location>
</feature>
<feature type="helix" evidence="23">
    <location>
        <begin position="876"/>
        <end position="891"/>
    </location>
</feature>
<feature type="strand" evidence="23">
    <location>
        <begin position="892"/>
        <end position="894"/>
    </location>
</feature>
<feature type="helix" evidence="23">
    <location>
        <begin position="895"/>
        <end position="906"/>
    </location>
</feature>
<feature type="helix" evidence="23">
    <location>
        <begin position="911"/>
        <end position="913"/>
    </location>
</feature>
<feature type="helix" evidence="23">
    <location>
        <begin position="917"/>
        <end position="927"/>
    </location>
</feature>
<feature type="helix" evidence="23">
    <location>
        <begin position="935"/>
        <end position="939"/>
    </location>
</feature>
<feature type="strand" evidence="23">
    <location>
        <begin position="940"/>
        <end position="943"/>
    </location>
</feature>
<feature type="helix" evidence="23">
    <location>
        <begin position="959"/>
        <end position="976"/>
    </location>
</feature>
<feature type="helix" evidence="23">
    <location>
        <begin position="978"/>
        <end position="980"/>
    </location>
</feature>
<feature type="helix" evidence="23">
    <location>
        <begin position="981"/>
        <end position="991"/>
    </location>
</feature>
<feature type="helix" evidence="23">
    <location>
        <begin position="992"/>
        <end position="997"/>
    </location>
</feature>
<feature type="helix" evidence="23">
    <location>
        <begin position="1001"/>
        <end position="1011"/>
    </location>
</feature>
<feature type="helix" evidence="23">
    <location>
        <begin position="1013"/>
        <end position="1016"/>
    </location>
</feature>
<feature type="helix" evidence="23">
    <location>
        <begin position="1020"/>
        <end position="1032"/>
    </location>
</feature>
<feature type="turn" evidence="23">
    <location>
        <begin position="1033"/>
        <end position="1037"/>
    </location>
</feature>
<feature type="strand" evidence="23">
    <location>
        <begin position="1042"/>
        <end position="1044"/>
    </location>
</feature>
<feature type="helix" evidence="23">
    <location>
        <begin position="1048"/>
        <end position="1051"/>
    </location>
</feature>
<feature type="helix" evidence="23">
    <location>
        <begin position="1065"/>
        <end position="1080"/>
    </location>
</feature>
<feature type="helix" evidence="23">
    <location>
        <begin position="1092"/>
        <end position="1094"/>
    </location>
</feature>
<feature type="strand" evidence="23">
    <location>
        <begin position="1095"/>
        <end position="1099"/>
    </location>
</feature>
<feature type="helix" evidence="23">
    <location>
        <begin position="1100"/>
        <end position="1114"/>
    </location>
</feature>
<feature type="strand" evidence="23">
    <location>
        <begin position="1115"/>
        <end position="1117"/>
    </location>
</feature>
<feature type="helix" evidence="23">
    <location>
        <begin position="1119"/>
        <end position="1131"/>
    </location>
</feature>
<feature type="strand" evidence="23">
    <location>
        <begin position="1135"/>
        <end position="1137"/>
    </location>
</feature>
<feature type="helix" evidence="23">
    <location>
        <begin position="1142"/>
        <end position="1155"/>
    </location>
</feature>
<feature type="helix" evidence="23">
    <location>
        <begin position="1158"/>
        <end position="1161"/>
    </location>
</feature>
<feature type="helix" evidence="23">
    <location>
        <begin position="1163"/>
        <end position="1172"/>
    </location>
</feature>
<feature type="helix" evidence="23">
    <location>
        <begin position="1175"/>
        <end position="1178"/>
    </location>
</feature>
<feature type="helix" evidence="23">
    <location>
        <begin position="1188"/>
        <end position="1190"/>
    </location>
</feature>
<feature type="helix" evidence="24">
    <location>
        <begin position="1193"/>
        <end position="1197"/>
    </location>
</feature>
<feature type="helix" evidence="23">
    <location>
        <begin position="1200"/>
        <end position="1217"/>
    </location>
</feature>
<feature type="helix" evidence="23">
    <location>
        <begin position="1221"/>
        <end position="1224"/>
    </location>
</feature>
<feature type="helix" evidence="23">
    <location>
        <begin position="1227"/>
        <end position="1233"/>
    </location>
</feature>
<feature type="turn" evidence="23">
    <location>
        <begin position="1234"/>
        <end position="1238"/>
    </location>
</feature>
<feature type="helix" evidence="23">
    <location>
        <begin position="1242"/>
        <end position="1252"/>
    </location>
</feature>
<feature type="helix" evidence="23">
    <location>
        <begin position="1253"/>
        <end position="1255"/>
    </location>
</feature>
<feature type="helix" evidence="23">
    <location>
        <begin position="1256"/>
        <end position="1262"/>
    </location>
</feature>
<feature type="helix" evidence="23">
    <location>
        <begin position="1264"/>
        <end position="1284"/>
    </location>
</feature>
<feature type="helix" evidence="23">
    <location>
        <begin position="1291"/>
        <end position="1304"/>
    </location>
</feature>
<feature type="turn" evidence="23">
    <location>
        <begin position="1305"/>
        <end position="1308"/>
    </location>
</feature>
<feature type="strand" evidence="23">
    <location>
        <begin position="1309"/>
        <end position="1311"/>
    </location>
</feature>
<feature type="helix" evidence="23">
    <location>
        <begin position="1312"/>
        <end position="1318"/>
    </location>
</feature>
<feature type="helix" evidence="23">
    <location>
        <begin position="1323"/>
        <end position="1328"/>
    </location>
</feature>
<feature type="helix" evidence="23">
    <location>
        <begin position="1329"/>
        <end position="1331"/>
    </location>
</feature>